<keyword id="KW-0687">Ribonucleoprotein</keyword>
<keyword id="KW-0689">Ribosomal protein</keyword>
<keyword id="KW-0694">RNA-binding</keyword>
<keyword id="KW-0699">rRNA-binding</keyword>
<name>RL4_LEGPL</name>
<protein>
    <recommendedName>
        <fullName evidence="1">Large ribosomal subunit protein uL4</fullName>
    </recommendedName>
    <alternativeName>
        <fullName evidence="3">50S ribosomal protein L4</fullName>
    </alternativeName>
</protein>
<dbReference type="EMBL" id="CR628337">
    <property type="protein sequence ID" value="CAH14601.1"/>
    <property type="molecule type" value="Genomic_DNA"/>
</dbReference>
<dbReference type="RefSeq" id="WP_011214625.1">
    <property type="nucleotide sequence ID" value="NC_006369.1"/>
</dbReference>
<dbReference type="SMR" id="Q5WZL1"/>
<dbReference type="KEGG" id="lpf:lpl0370"/>
<dbReference type="LegioList" id="lpl0370"/>
<dbReference type="HOGENOM" id="CLU_041575_5_2_6"/>
<dbReference type="Proteomes" id="UP000002517">
    <property type="component" value="Chromosome"/>
</dbReference>
<dbReference type="GO" id="GO:1990904">
    <property type="term" value="C:ribonucleoprotein complex"/>
    <property type="evidence" value="ECO:0007669"/>
    <property type="project" value="UniProtKB-KW"/>
</dbReference>
<dbReference type="GO" id="GO:0005840">
    <property type="term" value="C:ribosome"/>
    <property type="evidence" value="ECO:0007669"/>
    <property type="project" value="UniProtKB-KW"/>
</dbReference>
<dbReference type="GO" id="GO:0019843">
    <property type="term" value="F:rRNA binding"/>
    <property type="evidence" value="ECO:0007669"/>
    <property type="project" value="UniProtKB-UniRule"/>
</dbReference>
<dbReference type="GO" id="GO:0003735">
    <property type="term" value="F:structural constituent of ribosome"/>
    <property type="evidence" value="ECO:0007669"/>
    <property type="project" value="InterPro"/>
</dbReference>
<dbReference type="GO" id="GO:0006412">
    <property type="term" value="P:translation"/>
    <property type="evidence" value="ECO:0007669"/>
    <property type="project" value="UniProtKB-UniRule"/>
</dbReference>
<dbReference type="Gene3D" id="3.40.1370.10">
    <property type="match status" value="1"/>
</dbReference>
<dbReference type="HAMAP" id="MF_01328_B">
    <property type="entry name" value="Ribosomal_uL4_B"/>
    <property type="match status" value="1"/>
</dbReference>
<dbReference type="InterPro" id="IPR002136">
    <property type="entry name" value="Ribosomal_uL4"/>
</dbReference>
<dbReference type="InterPro" id="IPR013005">
    <property type="entry name" value="Ribosomal_uL4-like"/>
</dbReference>
<dbReference type="InterPro" id="IPR023574">
    <property type="entry name" value="Ribosomal_uL4_dom_sf"/>
</dbReference>
<dbReference type="NCBIfam" id="TIGR03953">
    <property type="entry name" value="rplD_bact"/>
    <property type="match status" value="1"/>
</dbReference>
<dbReference type="PANTHER" id="PTHR10746">
    <property type="entry name" value="50S RIBOSOMAL PROTEIN L4"/>
    <property type="match status" value="1"/>
</dbReference>
<dbReference type="PANTHER" id="PTHR10746:SF6">
    <property type="entry name" value="LARGE RIBOSOMAL SUBUNIT PROTEIN UL4M"/>
    <property type="match status" value="1"/>
</dbReference>
<dbReference type="Pfam" id="PF00573">
    <property type="entry name" value="Ribosomal_L4"/>
    <property type="match status" value="1"/>
</dbReference>
<dbReference type="SUPFAM" id="SSF52166">
    <property type="entry name" value="Ribosomal protein L4"/>
    <property type="match status" value="1"/>
</dbReference>
<accession>Q5WZL1</accession>
<proteinExistence type="inferred from homology"/>
<comment type="function">
    <text evidence="1">One of the primary rRNA binding proteins, this protein initially binds near the 5'-end of the 23S rRNA. It is important during the early stages of 50S assembly. It makes multiple contacts with different domains of the 23S rRNA in the assembled 50S subunit and ribosome.</text>
</comment>
<comment type="function">
    <text evidence="1">Forms part of the polypeptide exit tunnel.</text>
</comment>
<comment type="subunit">
    <text evidence="1">Part of the 50S ribosomal subunit.</text>
</comment>
<comment type="similarity">
    <text evidence="1">Belongs to the universal ribosomal protein uL4 family.</text>
</comment>
<reference key="1">
    <citation type="journal article" date="2004" name="Nat. Genet.">
        <title>Evidence in the Legionella pneumophila genome for exploitation of host cell functions and high genome plasticity.</title>
        <authorList>
            <person name="Cazalet C."/>
            <person name="Rusniok C."/>
            <person name="Brueggemann H."/>
            <person name="Zidane N."/>
            <person name="Magnier A."/>
            <person name="Ma L."/>
            <person name="Tichit M."/>
            <person name="Jarraud S."/>
            <person name="Bouchier C."/>
            <person name="Vandenesch F."/>
            <person name="Kunst F."/>
            <person name="Etienne J."/>
            <person name="Glaser P."/>
            <person name="Buchrieser C."/>
        </authorList>
    </citation>
    <scope>NUCLEOTIDE SEQUENCE [LARGE SCALE GENOMIC DNA]</scope>
    <source>
        <strain>Lens</strain>
    </source>
</reference>
<feature type="chain" id="PRO_0000242387" description="Large ribosomal subunit protein uL4">
    <location>
        <begin position="1"/>
        <end position="201"/>
    </location>
</feature>
<feature type="region of interest" description="Disordered" evidence="2">
    <location>
        <begin position="42"/>
        <end position="67"/>
    </location>
</feature>
<gene>
    <name evidence="1" type="primary">rplD</name>
    <name type="ordered locus">lpl0370</name>
</gene>
<organism>
    <name type="scientific">Legionella pneumophila (strain Lens)</name>
    <dbReference type="NCBI Taxonomy" id="297245"/>
    <lineage>
        <taxon>Bacteria</taxon>
        <taxon>Pseudomonadati</taxon>
        <taxon>Pseudomonadota</taxon>
        <taxon>Gammaproteobacteria</taxon>
        <taxon>Legionellales</taxon>
        <taxon>Legionellaceae</taxon>
        <taxon>Legionella</taxon>
    </lineage>
</organism>
<sequence length="201" mass="22678">MEITTIDTKSKLKLNKEIFAYTYNEGLVHQAVVTFMNNARSGNSAQKTRSEVSGGGKKPWNQKGTGRARAGTIRSPLWRSGGVTFASKKRDYSQKLNKKMYKRALRSIISELCRTGNLVVVSDFQCDNHKTKDFLKKMNQMEISSALIIMSEVGENEYLGSRNLIDYDICDVTTIDPVSLLRFEKVVVTEAAIKKIEEQLQ</sequence>
<evidence type="ECO:0000255" key="1">
    <source>
        <dbReference type="HAMAP-Rule" id="MF_01328"/>
    </source>
</evidence>
<evidence type="ECO:0000256" key="2">
    <source>
        <dbReference type="SAM" id="MobiDB-lite"/>
    </source>
</evidence>
<evidence type="ECO:0000305" key="3"/>